<name>MED30_XENLA</name>
<protein>
    <recommendedName>
        <fullName>Mediator of RNA polymerase II transcription subunit 30</fullName>
    </recommendedName>
    <alternativeName>
        <fullName>Mediator complex subunit 30</fullName>
    </alternativeName>
</protein>
<dbReference type="EMBL" id="BC123139">
    <property type="protein sequence ID" value="AAI23140.1"/>
    <property type="molecule type" value="mRNA"/>
</dbReference>
<dbReference type="RefSeq" id="NP_001090307.1">
    <property type="nucleotide sequence ID" value="NM_001096838.1"/>
</dbReference>
<dbReference type="SMR" id="Q0IHI6"/>
<dbReference type="DNASU" id="779216"/>
<dbReference type="GeneID" id="779216"/>
<dbReference type="KEGG" id="xla:779216"/>
<dbReference type="AGR" id="Xenbase:XB-GENE-1008117"/>
<dbReference type="CTD" id="779216"/>
<dbReference type="Xenbase" id="XB-GENE-1008117">
    <property type="gene designation" value="med30.S"/>
</dbReference>
<dbReference type="OMA" id="KNQEMKF"/>
<dbReference type="OrthoDB" id="10067025at2759"/>
<dbReference type="Proteomes" id="UP000186698">
    <property type="component" value="Chromosome 6S"/>
</dbReference>
<dbReference type="Bgee" id="779216">
    <property type="expression patterns" value="Expressed in egg cell and 19 other cell types or tissues"/>
</dbReference>
<dbReference type="GO" id="GO:0016592">
    <property type="term" value="C:mediator complex"/>
    <property type="evidence" value="ECO:0000318"/>
    <property type="project" value="GO_Central"/>
</dbReference>
<dbReference type="GO" id="GO:0003712">
    <property type="term" value="F:transcription coregulator activity"/>
    <property type="evidence" value="ECO:0000318"/>
    <property type="project" value="GO_Central"/>
</dbReference>
<dbReference type="GO" id="GO:0045893">
    <property type="term" value="P:positive regulation of DNA-templated transcription"/>
    <property type="evidence" value="ECO:0000318"/>
    <property type="project" value="GO_Central"/>
</dbReference>
<dbReference type="InterPro" id="IPR021019">
    <property type="entry name" value="Mediator_Med30_met"/>
</dbReference>
<dbReference type="PANTHER" id="PTHR31705">
    <property type="entry name" value="MEDIATOR OF RNA POLYMERASE II TRANSCRIPTION SUBUNIT 30"/>
    <property type="match status" value="1"/>
</dbReference>
<dbReference type="PANTHER" id="PTHR31705:SF4">
    <property type="entry name" value="MEDIATOR OF RNA POLYMERASE II TRANSCRIPTION SUBUNIT 30"/>
    <property type="match status" value="1"/>
</dbReference>
<dbReference type="Pfam" id="PF11315">
    <property type="entry name" value="Med30"/>
    <property type="match status" value="1"/>
</dbReference>
<proteinExistence type="evidence at transcript level"/>
<gene>
    <name type="primary">med30</name>
</gene>
<keyword id="KW-0010">Activator</keyword>
<keyword id="KW-0175">Coiled coil</keyword>
<keyword id="KW-0539">Nucleus</keyword>
<keyword id="KW-1185">Reference proteome</keyword>
<keyword id="KW-0804">Transcription</keyword>
<keyword id="KW-0805">Transcription regulation</keyword>
<organism>
    <name type="scientific">Xenopus laevis</name>
    <name type="common">African clawed frog</name>
    <dbReference type="NCBI Taxonomy" id="8355"/>
    <lineage>
        <taxon>Eukaryota</taxon>
        <taxon>Metazoa</taxon>
        <taxon>Chordata</taxon>
        <taxon>Craniata</taxon>
        <taxon>Vertebrata</taxon>
        <taxon>Euteleostomi</taxon>
        <taxon>Amphibia</taxon>
        <taxon>Batrachia</taxon>
        <taxon>Anura</taxon>
        <taxon>Pipoidea</taxon>
        <taxon>Pipidae</taxon>
        <taxon>Xenopodinae</taxon>
        <taxon>Xenopus</taxon>
        <taxon>Xenopus</taxon>
    </lineage>
</organism>
<evidence type="ECO:0000250" key="1"/>
<evidence type="ECO:0000255" key="2"/>
<evidence type="ECO:0000305" key="3"/>
<accession>Q0IHI6</accession>
<feature type="chain" id="PRO_0000305908" description="Mediator of RNA polymerase II transcription subunit 30">
    <location>
        <begin position="1"/>
        <end position="184"/>
    </location>
</feature>
<feature type="coiled-coil region" evidence="2">
    <location>
        <begin position="136"/>
        <end position="179"/>
    </location>
</feature>
<reference key="1">
    <citation type="submission" date="2006-09" db="EMBL/GenBank/DDBJ databases">
        <authorList>
            <consortium name="NIH - Xenopus Gene Collection (XGC) project"/>
        </authorList>
    </citation>
    <scope>NUCLEOTIDE SEQUENCE [LARGE SCALE MRNA]</scope>
    <source>
        <tissue>Testis</tissue>
    </source>
</reference>
<comment type="function">
    <text evidence="1">Component of the Mediator complex, a coactivator involved in the regulated transcription of nearly all RNA polymerase II-dependent genes. Mediator functions as a bridge to convey information from gene-specific regulatory proteins to the basal RNA polymerase II transcription machinery. Mediator is recruited to promoters by direct interactions with regulatory proteins and serves as a scaffold for the assembly of a functional preinitiation complex with RNA polymerase II and the general transcription factors (By similarity).</text>
</comment>
<comment type="subunit">
    <text evidence="1">Component of the Mediator complex.</text>
</comment>
<comment type="subcellular location">
    <subcellularLocation>
        <location evidence="3">Nucleus</location>
    </subcellularLocation>
</comment>
<comment type="similarity">
    <text evidence="3">Belongs to the Mediator complex subunit 30 family.</text>
</comment>
<sequence length="184" mass="20871">MSTPPLSGPGMGAAAGPGGFPGAQAATAAREVNTASLCRIGQETVQDIVFRTMEIFQLLRNMQLPNGVTYHTVTYQDRLGKLQEHLRQLSILFRKLRLVYDKCNENCAGLDPVPIEQLIPYVEEEYSKHDDRGIASQLRFASEEKREILEVNKKLKQKNQQLKQIMDQLRNLIWDINSMLAMRN</sequence>